<comment type="function">
    <text evidence="1">Catalyzes the conversion of glucosamine-6-phosphate to glucosamine-1-phosphate.</text>
</comment>
<comment type="catalytic activity">
    <reaction evidence="1">
        <text>alpha-D-glucosamine 1-phosphate = D-glucosamine 6-phosphate</text>
        <dbReference type="Rhea" id="RHEA:23424"/>
        <dbReference type="ChEBI" id="CHEBI:58516"/>
        <dbReference type="ChEBI" id="CHEBI:58725"/>
        <dbReference type="EC" id="5.4.2.10"/>
    </reaction>
</comment>
<comment type="cofactor">
    <cofactor evidence="1">
        <name>Mg(2+)</name>
        <dbReference type="ChEBI" id="CHEBI:18420"/>
    </cofactor>
    <text evidence="1">Binds 1 Mg(2+) ion per subunit.</text>
</comment>
<comment type="PTM">
    <text evidence="1">Activated by phosphorylation.</text>
</comment>
<comment type="similarity">
    <text evidence="1">Belongs to the phosphohexose mutase family.</text>
</comment>
<sequence>MAERKYFGTDGVRGKVGQFPITPDFALKLGWAAGKILATQGTKQVLIGKDTRISGYMLESALEAGLAAAGLSAAFVGPMPTPAIAYLTRTFRAEAGIVISASHNPYYDNGIKFFSSVGEKLPDEVEEAIEALLDQPMDCVESAQLGKAMRINDAAGRYIEFCKGTFPANASLKGYKIVVDCANGATYHIAPNVMRELGAEVIEIGTKPDGLNINEKCGATDIKALQKVVVESGADVGLAYDGDGDRIMMVDHLGNKVDGDQILFIIAREALRSGKLHGGVVGTLMSNMGLEVALKHLAIPFTRANVGDRYVLEQLKEKGWKLGGENSGHIIVLDKNTTGDGIIASLEVLAAMEAHKMSLNDLARAVPLFPQVLINVRFEGGKNPLESDAVKAVAADVEKRLAGRGRILLRKSGTEPLIRVMVECEDGALAQSCAEEIVEAVKSN</sequence>
<protein>
    <recommendedName>
        <fullName evidence="1">Phosphoglucosamine mutase</fullName>
        <ecNumber evidence="1">5.4.2.10</ecNumber>
    </recommendedName>
</protein>
<proteinExistence type="inferred from homology"/>
<feature type="chain" id="PRO_1000201054" description="Phosphoglucosamine mutase">
    <location>
        <begin position="1"/>
        <end position="444"/>
    </location>
</feature>
<feature type="active site" description="Phosphoserine intermediate" evidence="1">
    <location>
        <position position="102"/>
    </location>
</feature>
<feature type="binding site" description="via phosphate group" evidence="1">
    <location>
        <position position="102"/>
    </location>
    <ligand>
        <name>Mg(2+)</name>
        <dbReference type="ChEBI" id="CHEBI:18420"/>
    </ligand>
</feature>
<feature type="binding site" evidence="1">
    <location>
        <position position="241"/>
    </location>
    <ligand>
        <name>Mg(2+)</name>
        <dbReference type="ChEBI" id="CHEBI:18420"/>
    </ligand>
</feature>
<feature type="binding site" evidence="1">
    <location>
        <position position="243"/>
    </location>
    <ligand>
        <name>Mg(2+)</name>
        <dbReference type="ChEBI" id="CHEBI:18420"/>
    </ligand>
</feature>
<feature type="binding site" evidence="1">
    <location>
        <position position="245"/>
    </location>
    <ligand>
        <name>Mg(2+)</name>
        <dbReference type="ChEBI" id="CHEBI:18420"/>
    </ligand>
</feature>
<feature type="modified residue" description="Phosphoserine" evidence="1">
    <location>
        <position position="102"/>
    </location>
</feature>
<evidence type="ECO:0000255" key="1">
    <source>
        <dbReference type="HAMAP-Rule" id="MF_01554"/>
    </source>
</evidence>
<name>GLMM_ACTP7</name>
<gene>
    <name evidence="1" type="primary">glmM</name>
    <name type="ordered locus">APP7_1459</name>
</gene>
<reference key="1">
    <citation type="submission" date="2008-06" db="EMBL/GenBank/DDBJ databases">
        <title>Genome and proteome analysis of A. pleuropneumoniae serotype 7.</title>
        <authorList>
            <person name="Linke B."/>
            <person name="Buettner F."/>
            <person name="Martinez-Arias R."/>
            <person name="Goesmann A."/>
            <person name="Baltes N."/>
            <person name="Tegetmeyer H."/>
            <person name="Singh M."/>
            <person name="Gerlach G.F."/>
        </authorList>
    </citation>
    <scope>NUCLEOTIDE SEQUENCE [LARGE SCALE GENOMIC DNA]</scope>
    <source>
        <strain>AP76</strain>
    </source>
</reference>
<accession>B3H286</accession>
<dbReference type="EC" id="5.4.2.10" evidence="1"/>
<dbReference type="EMBL" id="CP001091">
    <property type="protein sequence ID" value="ACE62111.1"/>
    <property type="molecule type" value="Genomic_DNA"/>
</dbReference>
<dbReference type="RefSeq" id="WP_005617942.1">
    <property type="nucleotide sequence ID" value="NC_010939.1"/>
</dbReference>
<dbReference type="SMR" id="B3H286"/>
<dbReference type="KEGG" id="apa:APP7_1459"/>
<dbReference type="HOGENOM" id="CLU_016950_7_0_6"/>
<dbReference type="Proteomes" id="UP000001226">
    <property type="component" value="Chromosome"/>
</dbReference>
<dbReference type="GO" id="GO:0005829">
    <property type="term" value="C:cytosol"/>
    <property type="evidence" value="ECO:0007669"/>
    <property type="project" value="TreeGrafter"/>
</dbReference>
<dbReference type="GO" id="GO:0000287">
    <property type="term" value="F:magnesium ion binding"/>
    <property type="evidence" value="ECO:0007669"/>
    <property type="project" value="UniProtKB-UniRule"/>
</dbReference>
<dbReference type="GO" id="GO:0008966">
    <property type="term" value="F:phosphoglucosamine mutase activity"/>
    <property type="evidence" value="ECO:0007669"/>
    <property type="project" value="UniProtKB-UniRule"/>
</dbReference>
<dbReference type="GO" id="GO:0004615">
    <property type="term" value="F:phosphomannomutase activity"/>
    <property type="evidence" value="ECO:0007669"/>
    <property type="project" value="TreeGrafter"/>
</dbReference>
<dbReference type="GO" id="GO:0005975">
    <property type="term" value="P:carbohydrate metabolic process"/>
    <property type="evidence" value="ECO:0007669"/>
    <property type="project" value="InterPro"/>
</dbReference>
<dbReference type="GO" id="GO:0009252">
    <property type="term" value="P:peptidoglycan biosynthetic process"/>
    <property type="evidence" value="ECO:0007669"/>
    <property type="project" value="TreeGrafter"/>
</dbReference>
<dbReference type="GO" id="GO:0006048">
    <property type="term" value="P:UDP-N-acetylglucosamine biosynthetic process"/>
    <property type="evidence" value="ECO:0007669"/>
    <property type="project" value="TreeGrafter"/>
</dbReference>
<dbReference type="CDD" id="cd05802">
    <property type="entry name" value="GlmM"/>
    <property type="match status" value="1"/>
</dbReference>
<dbReference type="FunFam" id="3.30.310.50:FF:000001">
    <property type="entry name" value="Phosphoglucosamine mutase"/>
    <property type="match status" value="1"/>
</dbReference>
<dbReference type="FunFam" id="3.40.120.10:FF:000001">
    <property type="entry name" value="Phosphoglucosamine mutase"/>
    <property type="match status" value="1"/>
</dbReference>
<dbReference type="FunFam" id="3.40.120.10:FF:000002">
    <property type="entry name" value="Phosphoglucosamine mutase"/>
    <property type="match status" value="1"/>
</dbReference>
<dbReference type="Gene3D" id="3.40.120.10">
    <property type="entry name" value="Alpha-D-Glucose-1,6-Bisphosphate, subunit A, domain 3"/>
    <property type="match status" value="3"/>
</dbReference>
<dbReference type="Gene3D" id="3.30.310.50">
    <property type="entry name" value="Alpha-D-phosphohexomutase, C-terminal domain"/>
    <property type="match status" value="1"/>
</dbReference>
<dbReference type="HAMAP" id="MF_01554_B">
    <property type="entry name" value="GlmM_B"/>
    <property type="match status" value="1"/>
</dbReference>
<dbReference type="InterPro" id="IPR005844">
    <property type="entry name" value="A-D-PHexomutase_a/b/a-I"/>
</dbReference>
<dbReference type="InterPro" id="IPR016055">
    <property type="entry name" value="A-D-PHexomutase_a/b/a-I/II/III"/>
</dbReference>
<dbReference type="InterPro" id="IPR005845">
    <property type="entry name" value="A-D-PHexomutase_a/b/a-II"/>
</dbReference>
<dbReference type="InterPro" id="IPR005846">
    <property type="entry name" value="A-D-PHexomutase_a/b/a-III"/>
</dbReference>
<dbReference type="InterPro" id="IPR005843">
    <property type="entry name" value="A-D-PHexomutase_C"/>
</dbReference>
<dbReference type="InterPro" id="IPR036900">
    <property type="entry name" value="A-D-PHexomutase_C_sf"/>
</dbReference>
<dbReference type="InterPro" id="IPR016066">
    <property type="entry name" value="A-D-PHexomutase_CS"/>
</dbReference>
<dbReference type="InterPro" id="IPR005841">
    <property type="entry name" value="Alpha-D-phosphohexomutase_SF"/>
</dbReference>
<dbReference type="InterPro" id="IPR006352">
    <property type="entry name" value="GlmM_bact"/>
</dbReference>
<dbReference type="InterPro" id="IPR050060">
    <property type="entry name" value="Phosphoglucosamine_mutase"/>
</dbReference>
<dbReference type="NCBIfam" id="TIGR01455">
    <property type="entry name" value="glmM"/>
    <property type="match status" value="1"/>
</dbReference>
<dbReference type="NCBIfam" id="NF008139">
    <property type="entry name" value="PRK10887.1"/>
    <property type="match status" value="1"/>
</dbReference>
<dbReference type="PANTHER" id="PTHR42946:SF1">
    <property type="entry name" value="PHOSPHOGLUCOMUTASE (ALPHA-D-GLUCOSE-1,6-BISPHOSPHATE-DEPENDENT)"/>
    <property type="match status" value="1"/>
</dbReference>
<dbReference type="PANTHER" id="PTHR42946">
    <property type="entry name" value="PHOSPHOHEXOSE MUTASE"/>
    <property type="match status" value="1"/>
</dbReference>
<dbReference type="Pfam" id="PF02878">
    <property type="entry name" value="PGM_PMM_I"/>
    <property type="match status" value="1"/>
</dbReference>
<dbReference type="Pfam" id="PF02879">
    <property type="entry name" value="PGM_PMM_II"/>
    <property type="match status" value="1"/>
</dbReference>
<dbReference type="Pfam" id="PF02880">
    <property type="entry name" value="PGM_PMM_III"/>
    <property type="match status" value="1"/>
</dbReference>
<dbReference type="Pfam" id="PF00408">
    <property type="entry name" value="PGM_PMM_IV"/>
    <property type="match status" value="1"/>
</dbReference>
<dbReference type="PRINTS" id="PR00509">
    <property type="entry name" value="PGMPMM"/>
</dbReference>
<dbReference type="SUPFAM" id="SSF55957">
    <property type="entry name" value="Phosphoglucomutase, C-terminal domain"/>
    <property type="match status" value="1"/>
</dbReference>
<dbReference type="SUPFAM" id="SSF53738">
    <property type="entry name" value="Phosphoglucomutase, first 3 domains"/>
    <property type="match status" value="3"/>
</dbReference>
<dbReference type="PROSITE" id="PS00710">
    <property type="entry name" value="PGM_PMM"/>
    <property type="match status" value="1"/>
</dbReference>
<organism>
    <name type="scientific">Actinobacillus pleuropneumoniae serotype 7 (strain AP76)</name>
    <dbReference type="NCBI Taxonomy" id="537457"/>
    <lineage>
        <taxon>Bacteria</taxon>
        <taxon>Pseudomonadati</taxon>
        <taxon>Pseudomonadota</taxon>
        <taxon>Gammaproteobacteria</taxon>
        <taxon>Pasteurellales</taxon>
        <taxon>Pasteurellaceae</taxon>
        <taxon>Actinobacillus</taxon>
    </lineage>
</organism>
<keyword id="KW-0413">Isomerase</keyword>
<keyword id="KW-0460">Magnesium</keyword>
<keyword id="KW-0479">Metal-binding</keyword>
<keyword id="KW-0597">Phosphoprotein</keyword>